<accession>A3NAU8</accession>
<gene>
    <name evidence="1" type="primary">rpsB</name>
    <name type="ordered locus">BURPS668_2437</name>
</gene>
<evidence type="ECO:0000255" key="1">
    <source>
        <dbReference type="HAMAP-Rule" id="MF_00291"/>
    </source>
</evidence>
<evidence type="ECO:0000305" key="2"/>
<comment type="similarity">
    <text evidence="1">Belongs to the universal ribosomal protein uS2 family.</text>
</comment>
<name>RS2_BURP6</name>
<sequence length="246" mass="27137">MAITMRQMLEAGVHFGHQTRFWNPKMAPFIFGHRNKIHIINLEKTLPMYNDALKYVRQLAANRGTILFVGTKRQSRDTIAQEALRAGMPYVNARWLGGMLTNFKTLKVSIKRLKDMEAAVEAGELEKMSKKEALLFEREIAKLQKSIGGVKDMGGIPDAIFVVDVGYHKIAVTEANKLGVPVIAVVDTNHSPEGVDYVIPGNDDSSKAVALYAQGVADAILEGRANAVNEVVQAVRGDDEYVEENA</sequence>
<keyword id="KW-0687">Ribonucleoprotein</keyword>
<keyword id="KW-0689">Ribosomal protein</keyword>
<dbReference type="EMBL" id="CP000570">
    <property type="protein sequence ID" value="ABN82255.1"/>
    <property type="molecule type" value="Genomic_DNA"/>
</dbReference>
<dbReference type="RefSeq" id="WP_004193246.1">
    <property type="nucleotide sequence ID" value="NC_009074.1"/>
</dbReference>
<dbReference type="SMR" id="A3NAU8"/>
<dbReference type="GeneID" id="93060700"/>
<dbReference type="KEGG" id="bpd:BURPS668_2437"/>
<dbReference type="HOGENOM" id="CLU_040318_1_2_4"/>
<dbReference type="GO" id="GO:0022627">
    <property type="term" value="C:cytosolic small ribosomal subunit"/>
    <property type="evidence" value="ECO:0007669"/>
    <property type="project" value="TreeGrafter"/>
</dbReference>
<dbReference type="GO" id="GO:0003735">
    <property type="term" value="F:structural constituent of ribosome"/>
    <property type="evidence" value="ECO:0007669"/>
    <property type="project" value="InterPro"/>
</dbReference>
<dbReference type="GO" id="GO:0006412">
    <property type="term" value="P:translation"/>
    <property type="evidence" value="ECO:0007669"/>
    <property type="project" value="UniProtKB-UniRule"/>
</dbReference>
<dbReference type="CDD" id="cd01425">
    <property type="entry name" value="RPS2"/>
    <property type="match status" value="1"/>
</dbReference>
<dbReference type="FunFam" id="1.10.287.610:FF:000001">
    <property type="entry name" value="30S ribosomal protein S2"/>
    <property type="match status" value="1"/>
</dbReference>
<dbReference type="Gene3D" id="3.40.50.10490">
    <property type="entry name" value="Glucose-6-phosphate isomerase like protein, domain 1"/>
    <property type="match status" value="1"/>
</dbReference>
<dbReference type="Gene3D" id="1.10.287.610">
    <property type="entry name" value="Helix hairpin bin"/>
    <property type="match status" value="1"/>
</dbReference>
<dbReference type="HAMAP" id="MF_00291_B">
    <property type="entry name" value="Ribosomal_uS2_B"/>
    <property type="match status" value="1"/>
</dbReference>
<dbReference type="InterPro" id="IPR001865">
    <property type="entry name" value="Ribosomal_uS2"/>
</dbReference>
<dbReference type="InterPro" id="IPR005706">
    <property type="entry name" value="Ribosomal_uS2_bac/mit/plastid"/>
</dbReference>
<dbReference type="InterPro" id="IPR018130">
    <property type="entry name" value="Ribosomal_uS2_CS"/>
</dbReference>
<dbReference type="InterPro" id="IPR023591">
    <property type="entry name" value="Ribosomal_uS2_flav_dom_sf"/>
</dbReference>
<dbReference type="NCBIfam" id="TIGR01011">
    <property type="entry name" value="rpsB_bact"/>
    <property type="match status" value="1"/>
</dbReference>
<dbReference type="PANTHER" id="PTHR12534">
    <property type="entry name" value="30S RIBOSOMAL PROTEIN S2 PROKARYOTIC AND ORGANELLAR"/>
    <property type="match status" value="1"/>
</dbReference>
<dbReference type="PANTHER" id="PTHR12534:SF0">
    <property type="entry name" value="SMALL RIBOSOMAL SUBUNIT PROTEIN US2M"/>
    <property type="match status" value="1"/>
</dbReference>
<dbReference type="Pfam" id="PF00318">
    <property type="entry name" value="Ribosomal_S2"/>
    <property type="match status" value="1"/>
</dbReference>
<dbReference type="PRINTS" id="PR00395">
    <property type="entry name" value="RIBOSOMALS2"/>
</dbReference>
<dbReference type="SUPFAM" id="SSF52313">
    <property type="entry name" value="Ribosomal protein S2"/>
    <property type="match status" value="1"/>
</dbReference>
<dbReference type="PROSITE" id="PS00962">
    <property type="entry name" value="RIBOSOMAL_S2_1"/>
    <property type="match status" value="1"/>
</dbReference>
<protein>
    <recommendedName>
        <fullName evidence="1">Small ribosomal subunit protein uS2</fullName>
    </recommendedName>
    <alternativeName>
        <fullName evidence="2">30S ribosomal protein S2</fullName>
    </alternativeName>
</protein>
<organism>
    <name type="scientific">Burkholderia pseudomallei (strain 668)</name>
    <dbReference type="NCBI Taxonomy" id="320373"/>
    <lineage>
        <taxon>Bacteria</taxon>
        <taxon>Pseudomonadati</taxon>
        <taxon>Pseudomonadota</taxon>
        <taxon>Betaproteobacteria</taxon>
        <taxon>Burkholderiales</taxon>
        <taxon>Burkholderiaceae</taxon>
        <taxon>Burkholderia</taxon>
        <taxon>pseudomallei group</taxon>
    </lineage>
</organism>
<proteinExistence type="inferred from homology"/>
<reference key="1">
    <citation type="journal article" date="2010" name="Genome Biol. Evol.">
        <title>Continuing evolution of Burkholderia mallei through genome reduction and large-scale rearrangements.</title>
        <authorList>
            <person name="Losada L."/>
            <person name="Ronning C.M."/>
            <person name="DeShazer D."/>
            <person name="Woods D."/>
            <person name="Fedorova N."/>
            <person name="Kim H.S."/>
            <person name="Shabalina S.A."/>
            <person name="Pearson T.R."/>
            <person name="Brinkac L."/>
            <person name="Tan P."/>
            <person name="Nandi T."/>
            <person name="Crabtree J."/>
            <person name="Badger J."/>
            <person name="Beckstrom-Sternberg S."/>
            <person name="Saqib M."/>
            <person name="Schutzer S.E."/>
            <person name="Keim P."/>
            <person name="Nierman W.C."/>
        </authorList>
    </citation>
    <scope>NUCLEOTIDE SEQUENCE [LARGE SCALE GENOMIC DNA]</scope>
    <source>
        <strain>668</strain>
    </source>
</reference>
<feature type="chain" id="PRO_1000003914" description="Small ribosomal subunit protein uS2">
    <location>
        <begin position="1"/>
        <end position="246"/>
    </location>
</feature>